<proteinExistence type="evidence at protein level"/>
<evidence type="ECO:0000255" key="1"/>
<evidence type="ECO:0000256" key="2">
    <source>
        <dbReference type="SAM" id="MobiDB-lite"/>
    </source>
</evidence>
<evidence type="ECO:0000269" key="3">
    <source>
    </source>
</evidence>
<evidence type="ECO:0000269" key="4">
    <source>
    </source>
</evidence>
<evidence type="ECO:0000269" key="5">
    <source>
    </source>
</evidence>
<evidence type="ECO:0000269" key="6">
    <source>
    </source>
</evidence>
<evidence type="ECO:0000269" key="7">
    <source>
    </source>
</evidence>
<evidence type="ECO:0000305" key="8"/>
<evidence type="ECO:0000305" key="9">
    <source>
    </source>
</evidence>
<comment type="function">
    <text evidence="3 4 7">Required for FRI-mediated up-regulation of FLC transcripts, but not redundant with FRI and only partially redundant with FRL2. Required for the stabilization of the FRI-C complex.</text>
</comment>
<comment type="subunit">
    <text evidence="5 7">Component of the transcription activator complex FRI-C composed of FRI, FRL1, SUF4, FLX and FES1. Interacts with FRI and SUF4.</text>
</comment>
<comment type="interaction">
    <interactant intactId="EBI-2126272">
        <id>Q9FFF1</id>
    </interactant>
    <interactant intactId="EBI-2126140">
        <id>Q9C5G0</id>
        <label>SUF4</label>
    </interactant>
    <organismsDiffer>false</organismsDiffer>
    <experiments>3</experiments>
</comment>
<comment type="tissue specificity">
    <text evidence="6">Expressed during seed development and in dry seed. Preferentially expressed in the chalazal endosperm during early stages of seed development.</text>
</comment>
<comment type="disruption phenotype">
    <text evidence="3">Reduced levels of FLC expression and early flowering, but not redundant with FRI. Frl1 and frl2 double mutants flower earlier than frl1 single mutant, due to a partial redundancy.</text>
</comment>
<comment type="miscellaneous">
    <text evidence="9">In cv. Columbia and cv. Landsberg erecta, either FRL1 or FRL2, but not both, is functional and required for FRI-mediated up-regulation of FLC (PubMed:17056759).</text>
</comment>
<comment type="similarity">
    <text evidence="8">Belongs to the Frigida family.</text>
</comment>
<comment type="caution">
    <text evidence="8">In cv. Landsberg erecta, FRL1 (AC P0DKC9) is not functional due to a naturally occurring premature stop codon at position 279.</text>
</comment>
<sequence length="470" mass="52831">MTASETIATAINQIDEKKEKLKKAFDDLQAHRSLLSPSFSLSWSEIDSHFSSLQSSLASRFRLLHSTSPLEHDSYRIDASDAGKSSSSEEVSEQPVVEPELRALCEKIDGIGLIKYLIRIWDDETPLNQEVSAAIRYSPDTASMVLDAIEGSNYTPSSSGRSFDVRRVFVLLMEVLIEINANITVDTRNRAKKLAYHWKSKVGVKPFEALVFLHLVAAFELGSEFDTEELSDYVFMIAKYKQATLVCNKIGVDRKRVGKLIKTLLDSGKPILAVKFMYECGMTDEFEPIPVLKSYIKDCREAALRVCVEDNYSLKSQNEASDKEVSALKPLIKIIKDQNLESEFTQEKVEERVEELEKNKALRKRNTTNPPKQEPQQKGKKRTRDCKNGSQVPVPSQQLLSRPEALLMPEHSHHGLQLNPYGLMTSAFSGVVVNPLTGLFGSGATPQSLYYAQQTGYVLPPQYHPPYYSQ</sequence>
<name>FRL1A_ARATH</name>
<keyword id="KW-0175">Coiled coil</keyword>
<keyword id="KW-0217">Developmental protein</keyword>
<keyword id="KW-0221">Differentiation</keyword>
<keyword id="KW-0287">Flowering</keyword>
<keyword id="KW-1185">Reference proteome</keyword>
<gene>
    <name type="primary">FRL1</name>
    <name type="synonym">SUF8</name>
    <name type="ordered locus">At5g16320</name>
    <name type="ORF">MQK4.4</name>
</gene>
<protein>
    <recommendedName>
        <fullName>FRIGIDA-like protein 1</fullName>
        <shortName>AtFRIL1</shortName>
    </recommendedName>
    <alternativeName>
        <fullName>Protein SUPPRESSOR OF FRI 8</fullName>
    </alternativeName>
</protein>
<organism>
    <name type="scientific">Arabidopsis thaliana</name>
    <name type="common">Mouse-ear cress</name>
    <dbReference type="NCBI Taxonomy" id="3702"/>
    <lineage>
        <taxon>Eukaryota</taxon>
        <taxon>Viridiplantae</taxon>
        <taxon>Streptophyta</taxon>
        <taxon>Embryophyta</taxon>
        <taxon>Tracheophyta</taxon>
        <taxon>Spermatophyta</taxon>
        <taxon>Magnoliopsida</taxon>
        <taxon>eudicotyledons</taxon>
        <taxon>Gunneridae</taxon>
        <taxon>Pentapetalae</taxon>
        <taxon>rosids</taxon>
        <taxon>malvids</taxon>
        <taxon>Brassicales</taxon>
        <taxon>Brassicaceae</taxon>
        <taxon>Camelineae</taxon>
        <taxon>Arabidopsis</taxon>
    </lineage>
</organism>
<accession>Q9FFF1</accession>
<dbReference type="EMBL" id="BK004884">
    <property type="protein sequence ID" value="DAA05285.1"/>
    <property type="molecule type" value="Genomic_DNA"/>
</dbReference>
<dbReference type="EMBL" id="AB005242">
    <property type="protein sequence ID" value="BAB09599.1"/>
    <property type="molecule type" value="Genomic_DNA"/>
</dbReference>
<dbReference type="EMBL" id="CP002688">
    <property type="protein sequence ID" value="AED92279.1"/>
    <property type="molecule type" value="Genomic_DNA"/>
</dbReference>
<dbReference type="EMBL" id="AY075663">
    <property type="protein sequence ID" value="AAL77670.1"/>
    <property type="molecule type" value="mRNA"/>
</dbReference>
<dbReference type="EMBL" id="AY101525">
    <property type="protein sequence ID" value="AAM26646.1"/>
    <property type="molecule type" value="mRNA"/>
</dbReference>
<dbReference type="RefSeq" id="NP_197136.1">
    <property type="nucleotide sequence ID" value="NM_121637.4"/>
</dbReference>
<dbReference type="SMR" id="Q9FFF1"/>
<dbReference type="BioGRID" id="16769">
    <property type="interactions" value="8"/>
</dbReference>
<dbReference type="FunCoup" id="Q9FFF1">
    <property type="interactions" value="262"/>
</dbReference>
<dbReference type="IntAct" id="Q9FFF1">
    <property type="interactions" value="9"/>
</dbReference>
<dbReference type="STRING" id="3702.Q9FFF1"/>
<dbReference type="PaxDb" id="3702-AT5G16320.1"/>
<dbReference type="EnsemblPlants" id="AT5G16320.1">
    <property type="protein sequence ID" value="AT5G16320.1"/>
    <property type="gene ID" value="AT5G16320"/>
</dbReference>
<dbReference type="GeneID" id="831493"/>
<dbReference type="Gramene" id="AT5G16320.1">
    <property type="protein sequence ID" value="AT5G16320.1"/>
    <property type="gene ID" value="AT5G16320"/>
</dbReference>
<dbReference type="KEGG" id="ath:AT5G16320"/>
<dbReference type="Araport" id="AT5G16320"/>
<dbReference type="TAIR" id="AT5G16320">
    <property type="gene designation" value="FRL1"/>
</dbReference>
<dbReference type="eggNOG" id="ENOG502QUKS">
    <property type="taxonomic scope" value="Eukaryota"/>
</dbReference>
<dbReference type="HOGENOM" id="CLU_032433_0_0_1"/>
<dbReference type="InParanoid" id="Q9FFF1"/>
<dbReference type="OMA" id="MIEPSHH"/>
<dbReference type="PhylomeDB" id="Q9FFF1"/>
<dbReference type="PRO" id="PR:Q9FFF1"/>
<dbReference type="Proteomes" id="UP000006548">
    <property type="component" value="Chromosome 5"/>
</dbReference>
<dbReference type="ExpressionAtlas" id="Q9FFF1">
    <property type="expression patterns" value="baseline and differential"/>
</dbReference>
<dbReference type="GO" id="GO:0030154">
    <property type="term" value="P:cell differentiation"/>
    <property type="evidence" value="ECO:0007669"/>
    <property type="project" value="UniProtKB-KW"/>
</dbReference>
<dbReference type="GO" id="GO:0009908">
    <property type="term" value="P:flower development"/>
    <property type="evidence" value="ECO:0007669"/>
    <property type="project" value="UniProtKB-KW"/>
</dbReference>
<dbReference type="InterPro" id="IPR012474">
    <property type="entry name" value="Frigida"/>
</dbReference>
<dbReference type="PANTHER" id="PTHR31791:SF74">
    <property type="entry name" value="FRIGIDA-LIKE PROTEIN 1"/>
    <property type="match status" value="1"/>
</dbReference>
<dbReference type="PANTHER" id="PTHR31791">
    <property type="entry name" value="FRIGIDA-LIKE PROTEIN 3-RELATED"/>
    <property type="match status" value="1"/>
</dbReference>
<dbReference type="Pfam" id="PF07899">
    <property type="entry name" value="Frigida"/>
    <property type="match status" value="1"/>
</dbReference>
<feature type="chain" id="PRO_0000423738" description="FRIGIDA-like protein 1">
    <location>
        <begin position="1"/>
        <end position="470"/>
    </location>
</feature>
<feature type="region of interest" description="Disordered" evidence="2">
    <location>
        <begin position="355"/>
        <end position="400"/>
    </location>
</feature>
<feature type="coiled-coil region" evidence="1">
    <location>
        <begin position="336"/>
        <end position="369"/>
    </location>
</feature>
<feature type="compositionally biased region" description="Polar residues" evidence="2">
    <location>
        <begin position="388"/>
        <end position="400"/>
    </location>
</feature>
<reference key="1">
    <citation type="journal article" date="2004" name="Proc. Natl. Acad. Sci. U.S.A.">
        <title>FRIGIDA-related genes are required for the winter-annual habit in Arabidopsis.</title>
        <authorList>
            <person name="Michaels S.D."/>
            <person name="Bezerra I.C."/>
            <person name="Amasino R.M."/>
        </authorList>
    </citation>
    <scope>NUCLEOTIDE SEQUENCE [GENOMIC DNA]</scope>
    <scope>FUNCTION</scope>
    <scope>DISRUPTION PHENOTYPE</scope>
    <scope>GENE FAMILY</scope>
</reference>
<reference key="2">
    <citation type="journal article" date="1997" name="DNA Res.">
        <title>Structural analysis of Arabidopsis thaliana chromosome 5. I. Sequence features of the 1.6 Mb regions covered by twenty physically assigned P1 clones.</title>
        <authorList>
            <person name="Sato S."/>
            <person name="Kotani H."/>
            <person name="Nakamura Y."/>
            <person name="Kaneko T."/>
            <person name="Asamizu E."/>
            <person name="Fukami M."/>
            <person name="Miyajima N."/>
            <person name="Tabata S."/>
        </authorList>
    </citation>
    <scope>NUCLEOTIDE SEQUENCE [LARGE SCALE GENOMIC DNA]</scope>
    <source>
        <strain>cv. Columbia</strain>
    </source>
</reference>
<reference key="3">
    <citation type="journal article" date="2017" name="Plant J.">
        <title>Araport11: a complete reannotation of the Arabidopsis thaliana reference genome.</title>
        <authorList>
            <person name="Cheng C.Y."/>
            <person name="Krishnakumar V."/>
            <person name="Chan A.P."/>
            <person name="Thibaud-Nissen F."/>
            <person name="Schobel S."/>
            <person name="Town C.D."/>
        </authorList>
    </citation>
    <scope>GENOME REANNOTATION</scope>
    <source>
        <strain>cv. Columbia</strain>
    </source>
</reference>
<reference key="4">
    <citation type="journal article" date="2003" name="Science">
        <title>Empirical analysis of transcriptional activity in the Arabidopsis genome.</title>
        <authorList>
            <person name="Yamada K."/>
            <person name="Lim J."/>
            <person name="Dale J.M."/>
            <person name="Chen H."/>
            <person name="Shinn P."/>
            <person name="Palm C.J."/>
            <person name="Southwick A.M."/>
            <person name="Wu H.C."/>
            <person name="Kim C.J."/>
            <person name="Nguyen M."/>
            <person name="Pham P.K."/>
            <person name="Cheuk R.F."/>
            <person name="Karlin-Newmann G."/>
            <person name="Liu S.X."/>
            <person name="Lam B."/>
            <person name="Sakano H."/>
            <person name="Wu T."/>
            <person name="Yu G."/>
            <person name="Miranda M."/>
            <person name="Quach H.L."/>
            <person name="Tripp M."/>
            <person name="Chang C.H."/>
            <person name="Lee J.M."/>
            <person name="Toriumi M.J."/>
            <person name="Chan M.M."/>
            <person name="Tang C.C."/>
            <person name="Onodera C.S."/>
            <person name="Deng J.M."/>
            <person name="Akiyama K."/>
            <person name="Ansari Y."/>
            <person name="Arakawa T."/>
            <person name="Banh J."/>
            <person name="Banno F."/>
            <person name="Bowser L."/>
            <person name="Brooks S.Y."/>
            <person name="Carninci P."/>
            <person name="Chao Q."/>
            <person name="Choy N."/>
            <person name="Enju A."/>
            <person name="Goldsmith A.D."/>
            <person name="Gurjal M."/>
            <person name="Hansen N.F."/>
            <person name="Hayashizaki Y."/>
            <person name="Johnson-Hopson C."/>
            <person name="Hsuan V.W."/>
            <person name="Iida K."/>
            <person name="Karnes M."/>
            <person name="Khan S."/>
            <person name="Koesema E."/>
            <person name="Ishida J."/>
            <person name="Jiang P.X."/>
            <person name="Jones T."/>
            <person name="Kawai J."/>
            <person name="Kamiya A."/>
            <person name="Meyers C."/>
            <person name="Nakajima M."/>
            <person name="Narusaka M."/>
            <person name="Seki M."/>
            <person name="Sakurai T."/>
            <person name="Satou M."/>
            <person name="Tamse R."/>
            <person name="Vaysberg M."/>
            <person name="Wallender E.K."/>
            <person name="Wong C."/>
            <person name="Yamamura Y."/>
            <person name="Yuan S."/>
            <person name="Shinozaki K."/>
            <person name="Davis R.W."/>
            <person name="Theologis A."/>
            <person name="Ecker J.R."/>
        </authorList>
    </citation>
    <scope>NUCLEOTIDE SEQUENCE [LARGE SCALE MRNA]</scope>
    <source>
        <strain>cv. Columbia</strain>
    </source>
</reference>
<reference key="5">
    <citation type="journal article" date="2006" name="Plant Cell">
        <title>SUPPRESSOR OF FRIGIDA4, encoding a C2H2-Type zinc finger protein, represses flowering by transcriptional activation of Arabidopsis FLOWERING LOCUS C.</title>
        <authorList>
            <person name="Kim S."/>
            <person name="Choi K."/>
            <person name="Park C."/>
            <person name="Hwang H.J."/>
            <person name="Lee I."/>
        </authorList>
    </citation>
    <scope>INTERACTION WITH SUF4</scope>
</reference>
<reference key="6">
    <citation type="journal article" date="2006" name="Plant Physiol.">
        <title>FRIGIDA LIKE 2 is a functional allele in Landsberg erecta and compensates for a nonsense allele of FRIGIDA LIKE 1.</title>
        <authorList>
            <person name="Schlappi M.R."/>
        </authorList>
    </citation>
    <scope>FUNCTION</scope>
    <source>
        <strain>cv. Columbia</strain>
    </source>
</reference>
<reference key="7">
    <citation type="journal article" date="2010" name="Plant Mol. Biol.">
        <title>FRIGIDA and related proteins have a conserved central domain and family specific N- and C- terminal regions that are functionally important.</title>
        <authorList>
            <person name="Risk J.M."/>
            <person name="Laurie R.E."/>
            <person name="Macknight R.C."/>
            <person name="Day C.L."/>
        </authorList>
    </citation>
    <scope>GENE FAMILY</scope>
    <scope>NOMENCLATURE</scope>
    <scope>TISSUE SPECIFICITY</scope>
    <source>
        <strain>cv. Columbia</strain>
    </source>
</reference>
<reference key="8">
    <citation type="journal article" date="2011" name="Plant Cell">
        <title>The FRIGIDA complex activates transcription of FLC, a strong flowering repressor in Arabidopsis, by recruiting chromatin modification factors.</title>
        <authorList>
            <person name="Choi K."/>
            <person name="Kim J."/>
            <person name="Hwang H.J."/>
            <person name="Kim S."/>
            <person name="Park C."/>
            <person name="Kim S.Y."/>
            <person name="Lee I."/>
        </authorList>
    </citation>
    <scope>FUNCTION</scope>
    <scope>IDENTIFICATION BY MASS SPECTROMETRY</scope>
    <scope>IDENTIFICATION IN THE FRI-C COMPLEX</scope>
    <scope>INTERACTION WITH FRI AND SUF4</scope>
</reference>